<dbReference type="EC" id="3.6.5.-" evidence="2"/>
<dbReference type="EMBL" id="X79468">
    <property type="protein sequence ID" value="CAA55978.1"/>
    <property type="molecule type" value="mRNA"/>
</dbReference>
<dbReference type="EMBL" id="X77618">
    <property type="protein sequence ID" value="CAA54712.1"/>
    <property type="molecule type" value="Genomic_DNA"/>
</dbReference>
<dbReference type="PIR" id="S42033">
    <property type="entry name" value="S42033"/>
</dbReference>
<dbReference type="SMR" id="P41383"/>
<dbReference type="OMA" id="FTTCHIM"/>
<dbReference type="GO" id="GO:0005737">
    <property type="term" value="C:cytoplasm"/>
    <property type="evidence" value="ECO:0007669"/>
    <property type="project" value="UniProtKB-KW"/>
</dbReference>
<dbReference type="GO" id="GO:0005874">
    <property type="term" value="C:microtubule"/>
    <property type="evidence" value="ECO:0007669"/>
    <property type="project" value="UniProtKB-KW"/>
</dbReference>
<dbReference type="GO" id="GO:0005525">
    <property type="term" value="F:GTP binding"/>
    <property type="evidence" value="ECO:0007669"/>
    <property type="project" value="UniProtKB-KW"/>
</dbReference>
<dbReference type="GO" id="GO:0016787">
    <property type="term" value="F:hydrolase activity"/>
    <property type="evidence" value="ECO:0007669"/>
    <property type="project" value="UniProtKB-KW"/>
</dbReference>
<dbReference type="GO" id="GO:0046872">
    <property type="term" value="F:metal ion binding"/>
    <property type="evidence" value="ECO:0007669"/>
    <property type="project" value="UniProtKB-KW"/>
</dbReference>
<dbReference type="GO" id="GO:0005200">
    <property type="term" value="F:structural constituent of cytoskeleton"/>
    <property type="evidence" value="ECO:0007669"/>
    <property type="project" value="InterPro"/>
</dbReference>
<dbReference type="GO" id="GO:0007017">
    <property type="term" value="P:microtubule-based process"/>
    <property type="evidence" value="ECO:0007669"/>
    <property type="project" value="InterPro"/>
</dbReference>
<dbReference type="CDD" id="cd02186">
    <property type="entry name" value="alpha_tubulin"/>
    <property type="match status" value="1"/>
</dbReference>
<dbReference type="FunFam" id="1.10.287.600:FF:000005">
    <property type="entry name" value="Tubulin alpha chain"/>
    <property type="match status" value="1"/>
</dbReference>
<dbReference type="FunFam" id="3.30.1330.20:FF:000001">
    <property type="entry name" value="Tubulin alpha chain"/>
    <property type="match status" value="1"/>
</dbReference>
<dbReference type="FunFam" id="3.40.50.1440:FF:000002">
    <property type="entry name" value="Tubulin alpha chain"/>
    <property type="match status" value="1"/>
</dbReference>
<dbReference type="Gene3D" id="1.10.287.600">
    <property type="entry name" value="Helix hairpin bin"/>
    <property type="match status" value="1"/>
</dbReference>
<dbReference type="Gene3D" id="3.30.1330.20">
    <property type="entry name" value="Tubulin/FtsZ, C-terminal domain"/>
    <property type="match status" value="1"/>
</dbReference>
<dbReference type="Gene3D" id="3.40.50.1440">
    <property type="entry name" value="Tubulin/FtsZ, GTPase domain"/>
    <property type="match status" value="1"/>
</dbReference>
<dbReference type="InterPro" id="IPR002452">
    <property type="entry name" value="Alpha_tubulin"/>
</dbReference>
<dbReference type="InterPro" id="IPR008280">
    <property type="entry name" value="Tub_FtsZ_C"/>
</dbReference>
<dbReference type="InterPro" id="IPR000217">
    <property type="entry name" value="Tubulin"/>
</dbReference>
<dbReference type="InterPro" id="IPR037103">
    <property type="entry name" value="Tubulin/FtsZ-like_C"/>
</dbReference>
<dbReference type="InterPro" id="IPR018316">
    <property type="entry name" value="Tubulin/FtsZ_2-layer-sand-dom"/>
</dbReference>
<dbReference type="InterPro" id="IPR036525">
    <property type="entry name" value="Tubulin/FtsZ_GTPase_sf"/>
</dbReference>
<dbReference type="InterPro" id="IPR023123">
    <property type="entry name" value="Tubulin_C"/>
</dbReference>
<dbReference type="InterPro" id="IPR017975">
    <property type="entry name" value="Tubulin_CS"/>
</dbReference>
<dbReference type="InterPro" id="IPR003008">
    <property type="entry name" value="Tubulin_FtsZ_GTPase"/>
</dbReference>
<dbReference type="PANTHER" id="PTHR11588">
    <property type="entry name" value="TUBULIN"/>
    <property type="match status" value="1"/>
</dbReference>
<dbReference type="Pfam" id="PF00091">
    <property type="entry name" value="Tubulin"/>
    <property type="match status" value="1"/>
</dbReference>
<dbReference type="Pfam" id="PF03953">
    <property type="entry name" value="Tubulin_C"/>
    <property type="match status" value="1"/>
</dbReference>
<dbReference type="PRINTS" id="PR01162">
    <property type="entry name" value="ALPHATUBULIN"/>
</dbReference>
<dbReference type="PRINTS" id="PR01161">
    <property type="entry name" value="TUBULIN"/>
</dbReference>
<dbReference type="SMART" id="SM00864">
    <property type="entry name" value="Tubulin"/>
    <property type="match status" value="1"/>
</dbReference>
<dbReference type="SMART" id="SM00865">
    <property type="entry name" value="Tubulin_C"/>
    <property type="match status" value="1"/>
</dbReference>
<dbReference type="SUPFAM" id="SSF55307">
    <property type="entry name" value="Tubulin C-terminal domain-like"/>
    <property type="match status" value="1"/>
</dbReference>
<dbReference type="SUPFAM" id="SSF52490">
    <property type="entry name" value="Tubulin nucleotide-binding domain-like"/>
    <property type="match status" value="1"/>
</dbReference>
<dbReference type="PROSITE" id="PS00227">
    <property type="entry name" value="TUBULIN"/>
    <property type="match status" value="1"/>
</dbReference>
<evidence type="ECO:0000250" key="1"/>
<evidence type="ECO:0000250" key="2">
    <source>
        <dbReference type="UniProtKB" id="P68363"/>
    </source>
</evidence>
<evidence type="ECO:0000256" key="3">
    <source>
        <dbReference type="SAM" id="MobiDB-lite"/>
    </source>
</evidence>
<evidence type="ECO:0000305" key="4"/>
<name>TBA2_PATVU</name>
<comment type="function">
    <text>Tubulin is the major constituent of microtubules, a cylinder consisting of laterally associated linear protofilaments composed of alpha- and beta-tubulin heterodimers. Microtubules grow by the addition of GTP-tubulin dimers to the microtubule end, where a stabilizing cap forms. Below the cap, tubulin dimers are in GDP-bound state, owing to GTPase activity of alpha-tubulin.</text>
</comment>
<comment type="catalytic activity">
    <reaction evidence="2">
        <text>GTP + H2O = GDP + phosphate + H(+)</text>
        <dbReference type="Rhea" id="RHEA:19669"/>
        <dbReference type="ChEBI" id="CHEBI:15377"/>
        <dbReference type="ChEBI" id="CHEBI:15378"/>
        <dbReference type="ChEBI" id="CHEBI:37565"/>
        <dbReference type="ChEBI" id="CHEBI:43474"/>
        <dbReference type="ChEBI" id="CHEBI:58189"/>
    </reaction>
    <physiologicalReaction direction="left-to-right" evidence="2">
        <dbReference type="Rhea" id="RHEA:19670"/>
    </physiologicalReaction>
</comment>
<comment type="cofactor">
    <cofactor evidence="2">
        <name>Mg(2+)</name>
        <dbReference type="ChEBI" id="CHEBI:18420"/>
    </cofactor>
</comment>
<comment type="subunit">
    <text>Dimer of alpha and beta chains. A typical microtubule is a hollow water-filled tube with an outer diameter of 25 nm and an inner diameter of 15 nM. Alpha-beta heterodimers associate head-to-tail to form protofilaments running lengthwise along the microtubule wall with the beta-tubulin subunit facing the microtubule plus end conferring a structural polarity. Microtubules usually have 13 protofilaments but different protofilament numbers can be found in some organisms and specialized cells.</text>
</comment>
<comment type="subcellular location">
    <subcellularLocation>
        <location>Cytoplasm</location>
        <location>Cytoskeleton</location>
    </subcellularLocation>
</comment>
<comment type="PTM">
    <text evidence="1">Undergoes a tyrosination/detyrosination cycle, the cyclic removal and re-addition of a C-terminal tyrosine residue by the enzymes tubulin tyrosine carboxypeptidase (TTCP) and tubulin tyrosine ligase (TTL), respectively.</text>
</comment>
<comment type="PTM">
    <text evidence="1">Acetylation of alpha chains at Lys-40 stabilizes microtubules and affects affinity and processivity of microtubule motors. This modification has a role in multiple cellular functions, ranging from cell motility, cell cycle progression or cell differentiation to intracellular trafficking and signaling (By similarity).</text>
</comment>
<comment type="similarity">
    <text evidence="4">Belongs to the tubulin family.</text>
</comment>
<accession>P41383</accession>
<proteinExistence type="evidence at transcript level"/>
<keyword id="KW-0007">Acetylation</keyword>
<keyword id="KW-0963">Cytoplasm</keyword>
<keyword id="KW-0206">Cytoskeleton</keyword>
<keyword id="KW-0342">GTP-binding</keyword>
<keyword id="KW-0378">Hydrolase</keyword>
<keyword id="KW-0460">Magnesium</keyword>
<keyword id="KW-0479">Metal-binding</keyword>
<keyword id="KW-0493">Microtubule</keyword>
<keyword id="KW-0547">Nucleotide-binding</keyword>
<gene>
    <name type="primary">TUB2</name>
</gene>
<gene>
    <name type="primary">TUB4</name>
</gene>
<sequence>MRECISVHIGQAGVQMGNACWELYCLEHGIQPDGQMPSDKTIGGGDDSFNTFFSETGAGKHVPRAVFVDLEPTVVDEVRTGTYRQLFHPEQLITGKEDAANNYARGHYTVGKEIIDLVLDRIRKLADQCTGLQGFLIFHSFGGGTGSGFSSLLMERLSVDYGKKSKLEFAIYPAPQISTAVVEPYNSILTTHTTLEHSDCAFMVDNEAIYDICRRNLDIERPTYTNLNRLIGQIVSSITASLRFDGALNVDLTEFQTNLVPYPRIHFPLATYAPVISAEKAYHEQLTVAEITNACFEPANQMVKCDPRHGKYMSCCMLYRGDVVPKDVNAAIATIKTKRTIQFVDWCPTGFKVGINYQPPTVVPGGDLAKVQRAVCMLSNTTAIAEAWARLDHKFDLMYAKRAFVHWYVGEGMEEGEFSEAREDLAALEKDYEEVGVDSVEGEGEEEGGEEY</sequence>
<feature type="chain" id="PRO_0000048209" description="Tubulin alpha-2/alpha-4 chain">
    <location>
        <begin position="1"/>
        <end position="452"/>
    </location>
</feature>
<feature type="region of interest" description="Disordered" evidence="3">
    <location>
        <begin position="432"/>
        <end position="452"/>
    </location>
</feature>
<feature type="active site" evidence="2">
    <location>
        <position position="254"/>
    </location>
</feature>
<feature type="binding site" evidence="2">
    <location>
        <position position="11"/>
    </location>
    <ligand>
        <name>GTP</name>
        <dbReference type="ChEBI" id="CHEBI:37565"/>
    </ligand>
</feature>
<feature type="binding site" evidence="2">
    <location>
        <position position="71"/>
    </location>
    <ligand>
        <name>GTP</name>
        <dbReference type="ChEBI" id="CHEBI:37565"/>
    </ligand>
</feature>
<feature type="binding site" evidence="2">
    <location>
        <position position="71"/>
    </location>
    <ligand>
        <name>Mg(2+)</name>
        <dbReference type="ChEBI" id="CHEBI:18420"/>
    </ligand>
</feature>
<feature type="binding site" evidence="2">
    <location>
        <position position="140"/>
    </location>
    <ligand>
        <name>GTP</name>
        <dbReference type="ChEBI" id="CHEBI:37565"/>
    </ligand>
</feature>
<feature type="binding site" evidence="2">
    <location>
        <position position="144"/>
    </location>
    <ligand>
        <name>GTP</name>
        <dbReference type="ChEBI" id="CHEBI:37565"/>
    </ligand>
</feature>
<feature type="binding site" evidence="2">
    <location>
        <position position="145"/>
    </location>
    <ligand>
        <name>GTP</name>
        <dbReference type="ChEBI" id="CHEBI:37565"/>
    </ligand>
</feature>
<feature type="binding site" evidence="2">
    <location>
        <position position="179"/>
    </location>
    <ligand>
        <name>GTP</name>
        <dbReference type="ChEBI" id="CHEBI:37565"/>
    </ligand>
</feature>
<feature type="binding site" evidence="2">
    <location>
        <position position="206"/>
    </location>
    <ligand>
        <name>GTP</name>
        <dbReference type="ChEBI" id="CHEBI:37565"/>
    </ligand>
</feature>
<feature type="binding site" evidence="2">
    <location>
        <position position="228"/>
    </location>
    <ligand>
        <name>GTP</name>
        <dbReference type="ChEBI" id="CHEBI:37565"/>
    </ligand>
</feature>
<feature type="site" description="Involved in polymerization">
    <location>
        <position position="452"/>
    </location>
</feature>
<feature type="modified residue" description="N6-acetyllysine" evidence="1">
    <location>
        <position position="40"/>
    </location>
</feature>
<protein>
    <recommendedName>
        <fullName>Tubulin alpha-2/alpha-4 chain</fullName>
        <ecNumber evidence="2">3.6.5.-</ecNumber>
    </recommendedName>
</protein>
<reference key="1">
    <citation type="journal article" date="1994" name="Development">
        <title>Transcriptional regulation of tubulin gene expression in differentiating trochoblasts during early development of Patella vulgata.</title>
        <authorList>
            <person name="Damen W.G.M."/>
            <person name="van Grunsven L.A."/>
            <person name="van Loon A.E."/>
        </authorList>
    </citation>
    <scope>NUCLEOTIDE SEQUENCE [GENOMIC DNA]</scope>
</reference>
<organism>
    <name type="scientific">Patella vulgata</name>
    <name type="common">Common limpet</name>
    <dbReference type="NCBI Taxonomy" id="6465"/>
    <lineage>
        <taxon>Eukaryota</taxon>
        <taxon>Metazoa</taxon>
        <taxon>Spiralia</taxon>
        <taxon>Lophotrochozoa</taxon>
        <taxon>Mollusca</taxon>
        <taxon>Gastropoda</taxon>
        <taxon>Patellogastropoda</taxon>
        <taxon>Patelloidea</taxon>
        <taxon>Patellidae</taxon>
        <taxon>Patella</taxon>
    </lineage>
</organism>